<dbReference type="EMBL" id="DQ347958">
    <property type="protein sequence ID" value="ABC56201.1"/>
    <property type="molecule type" value="Genomic_DNA"/>
</dbReference>
<dbReference type="RefSeq" id="YP_538836.1">
    <property type="nucleotide sequence ID" value="NC_007943.1"/>
</dbReference>
<dbReference type="SMR" id="Q2MIJ9"/>
<dbReference type="GeneID" id="3989539"/>
<dbReference type="GO" id="GO:0009535">
    <property type="term" value="C:chloroplast thylakoid membrane"/>
    <property type="evidence" value="ECO:0007669"/>
    <property type="project" value="UniProtKB-SubCell"/>
</dbReference>
<dbReference type="GO" id="GO:0005886">
    <property type="term" value="C:plasma membrane"/>
    <property type="evidence" value="ECO:0007669"/>
    <property type="project" value="UniProtKB-UniRule"/>
</dbReference>
<dbReference type="GO" id="GO:0045259">
    <property type="term" value="C:proton-transporting ATP synthase complex"/>
    <property type="evidence" value="ECO:0007669"/>
    <property type="project" value="UniProtKB-KW"/>
</dbReference>
<dbReference type="GO" id="GO:0046933">
    <property type="term" value="F:proton-transporting ATP synthase activity, rotational mechanism"/>
    <property type="evidence" value="ECO:0007669"/>
    <property type="project" value="UniProtKB-UniRule"/>
</dbReference>
<dbReference type="CDD" id="cd00310">
    <property type="entry name" value="ATP-synt_Fo_a_6"/>
    <property type="match status" value="1"/>
</dbReference>
<dbReference type="FunFam" id="1.20.120.220:FF:000001">
    <property type="entry name" value="ATP synthase subunit a, chloroplastic"/>
    <property type="match status" value="1"/>
</dbReference>
<dbReference type="Gene3D" id="1.20.120.220">
    <property type="entry name" value="ATP synthase, F0 complex, subunit A"/>
    <property type="match status" value="1"/>
</dbReference>
<dbReference type="HAMAP" id="MF_01393">
    <property type="entry name" value="ATP_synth_a_bact"/>
    <property type="match status" value="1"/>
</dbReference>
<dbReference type="InterPro" id="IPR045082">
    <property type="entry name" value="ATP_syn_F0_a_bact/chloroplast"/>
</dbReference>
<dbReference type="InterPro" id="IPR000568">
    <property type="entry name" value="ATP_synth_F0_asu"/>
</dbReference>
<dbReference type="InterPro" id="IPR023011">
    <property type="entry name" value="ATP_synth_F0_asu_AS"/>
</dbReference>
<dbReference type="InterPro" id="IPR035908">
    <property type="entry name" value="F0_ATP_A_sf"/>
</dbReference>
<dbReference type="NCBIfam" id="TIGR01131">
    <property type="entry name" value="ATP_synt_6_or_A"/>
    <property type="match status" value="1"/>
</dbReference>
<dbReference type="PANTHER" id="PTHR42823">
    <property type="entry name" value="ATP SYNTHASE SUBUNIT A, CHLOROPLASTIC"/>
    <property type="match status" value="1"/>
</dbReference>
<dbReference type="PANTHER" id="PTHR42823:SF3">
    <property type="entry name" value="ATP SYNTHASE SUBUNIT A, CHLOROPLASTIC"/>
    <property type="match status" value="1"/>
</dbReference>
<dbReference type="Pfam" id="PF00119">
    <property type="entry name" value="ATP-synt_A"/>
    <property type="match status" value="1"/>
</dbReference>
<dbReference type="PRINTS" id="PR00123">
    <property type="entry name" value="ATPASEA"/>
</dbReference>
<dbReference type="SUPFAM" id="SSF81336">
    <property type="entry name" value="F1F0 ATP synthase subunit A"/>
    <property type="match status" value="1"/>
</dbReference>
<dbReference type="PROSITE" id="PS00449">
    <property type="entry name" value="ATPASE_A"/>
    <property type="match status" value="1"/>
</dbReference>
<organism>
    <name type="scientific">Solanum bulbocastanum</name>
    <name type="common">Wild potato</name>
    <dbReference type="NCBI Taxonomy" id="147425"/>
    <lineage>
        <taxon>Eukaryota</taxon>
        <taxon>Viridiplantae</taxon>
        <taxon>Streptophyta</taxon>
        <taxon>Embryophyta</taxon>
        <taxon>Tracheophyta</taxon>
        <taxon>Spermatophyta</taxon>
        <taxon>Magnoliopsida</taxon>
        <taxon>eudicotyledons</taxon>
        <taxon>Gunneridae</taxon>
        <taxon>Pentapetalae</taxon>
        <taxon>asterids</taxon>
        <taxon>lamiids</taxon>
        <taxon>Solanales</taxon>
        <taxon>Solanaceae</taxon>
        <taxon>Solanoideae</taxon>
        <taxon>Solaneae</taxon>
        <taxon>Solanum</taxon>
    </lineage>
</organism>
<comment type="function">
    <text evidence="1">Key component of the proton channel; it plays a direct role in the translocation of protons across the membrane.</text>
</comment>
<comment type="subunit">
    <text evidence="1">F-type ATPases have 2 components, CF(1) - the catalytic core - and CF(0) - the membrane proton channel. CF(1) has five subunits: alpha(3), beta(3), gamma(1), delta(1), epsilon(1). CF(0) has four main subunits: a, b, b' and c.</text>
</comment>
<comment type="subcellular location">
    <subcellularLocation>
        <location evidence="1">Plastid</location>
        <location evidence="1">Chloroplast thylakoid membrane</location>
        <topology evidence="1">Multi-pass membrane protein</topology>
    </subcellularLocation>
</comment>
<comment type="similarity">
    <text evidence="1">Belongs to the ATPase A chain family.</text>
</comment>
<gene>
    <name evidence="1" type="primary">atpI</name>
</gene>
<sequence>MNVLSCSINTLKGLYDISGVEVGQHFYWQIGGFQVHGQVLITSWVVIAILLGSATIAVRNPQTIPTGGQNFFEYVLEFIRDVSKTQIGEEYGPWVPFIGTMFLFIFVSNWSGALLPWKIIQLPHGELAAPTNDINTTVALALLTSVAYFYAGLTKKGLGYFGKYIQPTPILLPINILEDFTKPLSLSFRLFGNILADELVVVVLVSLVPLVVPIPVMLLGLFTSGIQALIFATLAAAYIGESMEGHH</sequence>
<geneLocation type="chloroplast"/>
<protein>
    <recommendedName>
        <fullName evidence="1">ATP synthase subunit a, chloroplastic</fullName>
    </recommendedName>
    <alternativeName>
        <fullName evidence="1">ATP synthase F0 sector subunit a</fullName>
    </alternativeName>
    <alternativeName>
        <fullName evidence="1">F-ATPase subunit IV</fullName>
    </alternativeName>
</protein>
<evidence type="ECO:0000255" key="1">
    <source>
        <dbReference type="HAMAP-Rule" id="MF_01393"/>
    </source>
</evidence>
<reference key="1">
    <citation type="journal article" date="2006" name="Theor. Appl. Genet.">
        <title>Complete chloroplast genome sequences of Solanum bulbocastanum, Solanum lycopersicum and comparative analyses with other Solanaceae genomes.</title>
        <authorList>
            <person name="Daniell H."/>
            <person name="Lee S.-B."/>
            <person name="Grevich J."/>
            <person name="Saski C."/>
            <person name="Quesada-Vargas T."/>
            <person name="Guda C."/>
            <person name="Tomkins J."/>
            <person name="Jansen R.K."/>
        </authorList>
    </citation>
    <scope>NUCLEOTIDE SEQUENCE [LARGE SCALE GENOMIC DNA]</scope>
    <source>
        <strain>cv. PT29</strain>
    </source>
</reference>
<keyword id="KW-0066">ATP synthesis</keyword>
<keyword id="KW-0138">CF(0)</keyword>
<keyword id="KW-0150">Chloroplast</keyword>
<keyword id="KW-0375">Hydrogen ion transport</keyword>
<keyword id="KW-0406">Ion transport</keyword>
<keyword id="KW-0472">Membrane</keyword>
<keyword id="KW-0934">Plastid</keyword>
<keyword id="KW-0793">Thylakoid</keyword>
<keyword id="KW-0812">Transmembrane</keyword>
<keyword id="KW-1133">Transmembrane helix</keyword>
<keyword id="KW-0813">Transport</keyword>
<feature type="chain" id="PRO_0000362599" description="ATP synthase subunit a, chloroplastic">
    <location>
        <begin position="1"/>
        <end position="247"/>
    </location>
</feature>
<feature type="transmembrane region" description="Helical" evidence="1">
    <location>
        <begin position="38"/>
        <end position="58"/>
    </location>
</feature>
<feature type="transmembrane region" description="Helical" evidence="1">
    <location>
        <begin position="95"/>
        <end position="115"/>
    </location>
</feature>
<feature type="transmembrane region" description="Helical" evidence="1">
    <location>
        <begin position="134"/>
        <end position="154"/>
    </location>
</feature>
<feature type="transmembrane region" description="Helical" evidence="1">
    <location>
        <begin position="199"/>
        <end position="219"/>
    </location>
</feature>
<feature type="transmembrane region" description="Helical" evidence="1">
    <location>
        <begin position="220"/>
        <end position="240"/>
    </location>
</feature>
<proteinExistence type="inferred from homology"/>
<name>ATPI_SOLBU</name>
<accession>Q2MIJ9</accession>